<gene>
    <name type="primary">Gpr135</name>
</gene>
<accession>Q7TQP2</accession>
<comment type="function">
    <text evidence="1">Orphan receptor. Has spontaneous activity for beta-arrestin recruitment (By similarity). Shows a reciprocal regulatory interaction with the melatonin receptor MTNR1B most likely through receptor heteromerization (By similarity).</text>
</comment>
<comment type="subunit">
    <text evidence="1">Interacts with MTNR1B. Interacts with ARRB1 and ARRB2 in a spontaneous and agonist-independent manner; leading to the internalization of GPR135 in the endosomal compartment (By similarity).</text>
</comment>
<comment type="subcellular location">
    <subcellularLocation>
        <location evidence="1">Cell membrane</location>
        <topology evidence="2">Multi-pass membrane protein</topology>
    </subcellularLocation>
    <subcellularLocation>
        <location evidence="1">Endosome membrane</location>
        <topology evidence="2">Multi-pass membrane protein</topology>
    </subcellularLocation>
    <text evidence="1">Colocalizes with ARRB2/beta-arrestin-2 in the endosome (By similarity).</text>
</comment>
<comment type="similarity">
    <text evidence="3">Belongs to the G-protein coupled receptor 1 family.</text>
</comment>
<evidence type="ECO:0000250" key="1">
    <source>
        <dbReference type="UniProtKB" id="Q8IZ08"/>
    </source>
</evidence>
<evidence type="ECO:0000255" key="2"/>
<evidence type="ECO:0000255" key="3">
    <source>
        <dbReference type="PROSITE-ProRule" id="PRU00521"/>
    </source>
</evidence>
<evidence type="ECO:0000256" key="4">
    <source>
        <dbReference type="SAM" id="MobiDB-lite"/>
    </source>
</evidence>
<proteinExistence type="evidence at transcript level"/>
<organism>
    <name type="scientific">Mus musculus</name>
    <name type="common">Mouse</name>
    <dbReference type="NCBI Taxonomy" id="10090"/>
    <lineage>
        <taxon>Eukaryota</taxon>
        <taxon>Metazoa</taxon>
        <taxon>Chordata</taxon>
        <taxon>Craniata</taxon>
        <taxon>Vertebrata</taxon>
        <taxon>Euteleostomi</taxon>
        <taxon>Mammalia</taxon>
        <taxon>Eutheria</taxon>
        <taxon>Euarchontoglires</taxon>
        <taxon>Glires</taxon>
        <taxon>Rodentia</taxon>
        <taxon>Myomorpha</taxon>
        <taxon>Muroidea</taxon>
        <taxon>Muridae</taxon>
        <taxon>Murinae</taxon>
        <taxon>Mus</taxon>
        <taxon>Mus</taxon>
    </lineage>
</organism>
<feature type="chain" id="PRO_0000069613" description="G-protein coupled receptor 135">
    <location>
        <begin position="1"/>
        <end position="457"/>
    </location>
</feature>
<feature type="topological domain" description="Extracellular" evidence="2">
    <location>
        <begin position="1"/>
        <end position="64"/>
    </location>
</feature>
<feature type="transmembrane region" description="Helical; Name=1" evidence="2">
    <location>
        <begin position="65"/>
        <end position="85"/>
    </location>
</feature>
<feature type="topological domain" description="Cytoplasmic" evidence="2">
    <location>
        <begin position="86"/>
        <end position="109"/>
    </location>
</feature>
<feature type="transmembrane region" description="Helical; Name=2" evidence="2">
    <location>
        <begin position="110"/>
        <end position="130"/>
    </location>
</feature>
<feature type="topological domain" description="Extracellular" evidence="2">
    <location>
        <begin position="131"/>
        <end position="156"/>
    </location>
</feature>
<feature type="transmembrane region" description="Helical; Name=3" evidence="2">
    <location>
        <begin position="157"/>
        <end position="177"/>
    </location>
</feature>
<feature type="topological domain" description="Cytoplasmic" evidence="2">
    <location>
        <begin position="178"/>
        <end position="189"/>
    </location>
</feature>
<feature type="transmembrane region" description="Helical; Name=4" evidence="2">
    <location>
        <begin position="190"/>
        <end position="210"/>
    </location>
</feature>
<feature type="topological domain" description="Extracellular" evidence="2">
    <location>
        <begin position="211"/>
        <end position="235"/>
    </location>
</feature>
<feature type="transmembrane region" description="Helical; Name=5" evidence="2">
    <location>
        <begin position="236"/>
        <end position="256"/>
    </location>
</feature>
<feature type="topological domain" description="Cytoplasmic" evidence="2">
    <location>
        <begin position="257"/>
        <end position="295"/>
    </location>
</feature>
<feature type="transmembrane region" description="Helical; Name=6" evidence="2">
    <location>
        <begin position="296"/>
        <end position="316"/>
    </location>
</feature>
<feature type="topological domain" description="Extracellular" evidence="2">
    <location>
        <begin position="317"/>
        <end position="329"/>
    </location>
</feature>
<feature type="transmembrane region" description="Helical; Name=7" evidence="2">
    <location>
        <begin position="330"/>
        <end position="350"/>
    </location>
</feature>
<feature type="topological domain" description="Cytoplasmic" evidence="2">
    <location>
        <begin position="351"/>
        <end position="457"/>
    </location>
</feature>
<feature type="region of interest" description="Disordered" evidence="4">
    <location>
        <begin position="1"/>
        <end position="26"/>
    </location>
</feature>
<feature type="glycosylation site" description="N-linked (GlcNAc...) asparagine" evidence="2">
    <location>
        <position position="47"/>
    </location>
</feature>
<sequence>MEEQARPPGRPAASATLQGSAHPGGAASTATAAALSFSSVATVTLGNQSDAGRPEAAGSRGPAPLLWHGAAVAAQALVLLLIFLLSSLGNCAVMGVIVKHRQLRTVTNAFILSLSLSDLLTALLCLPAAFLDLFAPPGDSGPWRSFCAASRFFSSCFGIVSTFSVALISLDRYCAIVRPPRDKLGRRRALQLLAGAWLAALGFSLPWDLLRAPREPPAPQSFHRCLYRTSPDPAQLGVAYSVGLVVACYLLPFLLMCFCRYHICKTVRLSDVRVRPMTTYARVLRFFSEVRTATTVLIMIIFVMCCWGPYCFLVLLAATRQGQATQAPSLLNVAAVWLTWANGAINPVIYAIRNPNISMLLGRNREEGYRTRNMDAFLPSQGLGFQARSRNRLRNGCANRLGACSRMPSSNPASGSGGEVVMWARKNPVVLFFREGPPDSVMEVGKLHNSETRDSSI</sequence>
<keyword id="KW-1003">Cell membrane</keyword>
<keyword id="KW-0967">Endosome</keyword>
<keyword id="KW-0297">G-protein coupled receptor</keyword>
<keyword id="KW-0325">Glycoprotein</keyword>
<keyword id="KW-0472">Membrane</keyword>
<keyword id="KW-0675">Receptor</keyword>
<keyword id="KW-1185">Reference proteome</keyword>
<keyword id="KW-0807">Transducer</keyword>
<keyword id="KW-0812">Transmembrane</keyword>
<keyword id="KW-1133">Transmembrane helix</keyword>
<reference key="1">
    <citation type="journal article" date="2003" name="FEBS Lett.">
        <title>Seven evolutionarily conserved human rhodopsin G protein-coupled receptors lacking close relatives.</title>
        <authorList>
            <person name="Fredriksson R."/>
            <person name="Hoeglund P.J."/>
            <person name="Gloriam D.E.I."/>
            <person name="Lagerstroem M.C."/>
            <person name="Schioeth H.B."/>
        </authorList>
    </citation>
    <scope>NUCLEOTIDE SEQUENCE [MRNA]</scope>
</reference>
<name>GP135_MOUSE</name>
<dbReference type="EMBL" id="AY288425">
    <property type="protein sequence ID" value="AAP72134.1"/>
    <property type="molecule type" value="mRNA"/>
</dbReference>
<dbReference type="CCDS" id="CCDS25965.1"/>
<dbReference type="RefSeq" id="NP_861417.1">
    <property type="nucleotide sequence ID" value="NM_181752.2"/>
</dbReference>
<dbReference type="SMR" id="Q7TQP2"/>
<dbReference type="FunCoup" id="Q7TQP2">
    <property type="interactions" value="620"/>
</dbReference>
<dbReference type="STRING" id="10090.ENSMUSP00000058762"/>
<dbReference type="GlyCosmos" id="Q7TQP2">
    <property type="glycosylation" value="1 site, No reported glycans"/>
</dbReference>
<dbReference type="GlyGen" id="Q7TQP2">
    <property type="glycosylation" value="1 site"/>
</dbReference>
<dbReference type="PhosphoSitePlus" id="Q7TQP2"/>
<dbReference type="PaxDb" id="10090-ENSMUSP00000058762"/>
<dbReference type="Antibodypedia" id="24279">
    <property type="antibodies" value="93 antibodies from 24 providers"/>
</dbReference>
<dbReference type="DNASU" id="238252"/>
<dbReference type="Ensembl" id="ENSMUST00000050649.6">
    <property type="protein sequence ID" value="ENSMUSP00000058762.5"/>
    <property type="gene ID" value="ENSMUSG00000043398.6"/>
</dbReference>
<dbReference type="GeneID" id="238252"/>
<dbReference type="KEGG" id="mmu:238252"/>
<dbReference type="UCSC" id="uc007nvc.1">
    <property type="organism name" value="mouse"/>
</dbReference>
<dbReference type="AGR" id="MGI:2676315"/>
<dbReference type="CTD" id="64582"/>
<dbReference type="MGI" id="MGI:2676315">
    <property type="gene designation" value="Gpr135"/>
</dbReference>
<dbReference type="VEuPathDB" id="HostDB:ENSMUSG00000043398"/>
<dbReference type="eggNOG" id="KOG3656">
    <property type="taxonomic scope" value="Eukaryota"/>
</dbReference>
<dbReference type="GeneTree" id="ENSGT00950000182998"/>
<dbReference type="HOGENOM" id="CLU_048891_0_0_1"/>
<dbReference type="InParanoid" id="Q7TQP2"/>
<dbReference type="OMA" id="FFCRDAQ"/>
<dbReference type="OrthoDB" id="9927625at2759"/>
<dbReference type="PhylomeDB" id="Q7TQP2"/>
<dbReference type="TreeFam" id="TF333332"/>
<dbReference type="BioGRID-ORCS" id="238252">
    <property type="hits" value="0 hits in 78 CRISPR screens"/>
</dbReference>
<dbReference type="PRO" id="PR:Q7TQP2"/>
<dbReference type="Proteomes" id="UP000000589">
    <property type="component" value="Chromosome 12"/>
</dbReference>
<dbReference type="RNAct" id="Q7TQP2">
    <property type="molecule type" value="protein"/>
</dbReference>
<dbReference type="Bgee" id="ENSMUSG00000043398">
    <property type="expression patterns" value="Expressed in metanephric proximal tubule and 148 other cell types or tissues"/>
</dbReference>
<dbReference type="ExpressionAtlas" id="Q7TQP2">
    <property type="expression patterns" value="baseline and differential"/>
</dbReference>
<dbReference type="GO" id="GO:0010008">
    <property type="term" value="C:endosome membrane"/>
    <property type="evidence" value="ECO:0007669"/>
    <property type="project" value="UniProtKB-SubCell"/>
</dbReference>
<dbReference type="GO" id="GO:0005886">
    <property type="term" value="C:plasma membrane"/>
    <property type="evidence" value="ECO:0007669"/>
    <property type="project" value="UniProtKB-SubCell"/>
</dbReference>
<dbReference type="GO" id="GO:1990763">
    <property type="term" value="F:arrestin family protein binding"/>
    <property type="evidence" value="ECO:0007669"/>
    <property type="project" value="Ensembl"/>
</dbReference>
<dbReference type="GO" id="GO:0004930">
    <property type="term" value="F:G protein-coupled receptor activity"/>
    <property type="evidence" value="ECO:0007669"/>
    <property type="project" value="UniProtKB-KW"/>
</dbReference>
<dbReference type="FunFam" id="1.20.1070.10:FF:000280">
    <property type="entry name" value="probable G-protein coupled receptor 135"/>
    <property type="match status" value="1"/>
</dbReference>
<dbReference type="Gene3D" id="1.20.1070.10">
    <property type="entry name" value="Rhodopsin 7-helix transmembrane proteins"/>
    <property type="match status" value="1"/>
</dbReference>
<dbReference type="InterPro" id="IPR000276">
    <property type="entry name" value="GPCR_Rhodpsn"/>
</dbReference>
<dbReference type="InterPro" id="IPR017452">
    <property type="entry name" value="GPCR_Rhodpsn_7TM"/>
</dbReference>
<dbReference type="PANTHER" id="PTHR22752">
    <property type="entry name" value="G PROTEIN-COUPLED RECEPTOR"/>
    <property type="match status" value="1"/>
</dbReference>
<dbReference type="PANTHER" id="PTHR22752:SF3">
    <property type="entry name" value="G-PROTEIN COUPLED RECEPTOR 135"/>
    <property type="match status" value="1"/>
</dbReference>
<dbReference type="Pfam" id="PF00001">
    <property type="entry name" value="7tm_1"/>
    <property type="match status" value="1"/>
</dbReference>
<dbReference type="PRINTS" id="PR00237">
    <property type="entry name" value="GPCRRHODOPSN"/>
</dbReference>
<dbReference type="SUPFAM" id="SSF81321">
    <property type="entry name" value="Family A G protein-coupled receptor-like"/>
    <property type="match status" value="1"/>
</dbReference>
<dbReference type="PROSITE" id="PS00237">
    <property type="entry name" value="G_PROTEIN_RECEP_F1_1"/>
    <property type="match status" value="1"/>
</dbReference>
<dbReference type="PROSITE" id="PS50262">
    <property type="entry name" value="G_PROTEIN_RECEP_F1_2"/>
    <property type="match status" value="1"/>
</dbReference>
<protein>
    <recommendedName>
        <fullName>G-protein coupled receptor 135</fullName>
    </recommendedName>
</protein>